<reference key="1">
    <citation type="submission" date="2008-02" db="EMBL/GenBank/DDBJ databases">
        <title>Complete sequence of Haemophilus somnus 2336.</title>
        <authorList>
            <consortium name="US DOE Joint Genome Institute"/>
            <person name="Siddaramappa S."/>
            <person name="Duncan A.J."/>
            <person name="Challacombe J.F."/>
            <person name="Rainey D."/>
            <person name="Gillaspy A.F."/>
            <person name="Carson M."/>
            <person name="Gipson J."/>
            <person name="Gipson M."/>
            <person name="Bruce D."/>
            <person name="Detter J.C."/>
            <person name="Han C.S."/>
            <person name="Land M."/>
            <person name="Tapia R."/>
            <person name="Thompson L.S."/>
            <person name="Orvis J."/>
            <person name="Zaitshik J."/>
            <person name="Barnes G."/>
            <person name="Brettin T.S."/>
            <person name="Dyer D.W."/>
            <person name="Inzana T.J."/>
        </authorList>
    </citation>
    <scope>NUCLEOTIDE SEQUENCE [LARGE SCALE GENOMIC DNA]</scope>
    <source>
        <strain>2336</strain>
    </source>
</reference>
<name>TRMB_HISS2</name>
<feature type="chain" id="PRO_1000084443" description="tRNA (guanine-N(7)-)-methyltransferase">
    <location>
        <begin position="1"/>
        <end position="251"/>
    </location>
</feature>
<feature type="active site" evidence="1">
    <location>
        <position position="155"/>
    </location>
</feature>
<feature type="binding site" evidence="2">
    <location>
        <position position="80"/>
    </location>
    <ligand>
        <name>S-adenosyl-L-methionine</name>
        <dbReference type="ChEBI" id="CHEBI:59789"/>
    </ligand>
</feature>
<feature type="binding site" evidence="2">
    <location>
        <position position="105"/>
    </location>
    <ligand>
        <name>S-adenosyl-L-methionine</name>
        <dbReference type="ChEBI" id="CHEBI:59789"/>
    </ligand>
</feature>
<feature type="binding site" evidence="2">
    <location>
        <position position="132"/>
    </location>
    <ligand>
        <name>S-adenosyl-L-methionine</name>
        <dbReference type="ChEBI" id="CHEBI:59789"/>
    </ligand>
</feature>
<feature type="binding site" evidence="2">
    <location>
        <position position="155"/>
    </location>
    <ligand>
        <name>S-adenosyl-L-methionine</name>
        <dbReference type="ChEBI" id="CHEBI:59789"/>
    </ligand>
</feature>
<feature type="binding site" evidence="2">
    <location>
        <position position="159"/>
    </location>
    <ligand>
        <name>substrate</name>
    </ligand>
</feature>
<feature type="binding site" evidence="2">
    <location>
        <position position="191"/>
    </location>
    <ligand>
        <name>substrate</name>
    </ligand>
</feature>
<feature type="binding site" evidence="2">
    <location>
        <begin position="228"/>
        <end position="231"/>
    </location>
    <ligand>
        <name>substrate</name>
    </ligand>
</feature>
<protein>
    <recommendedName>
        <fullName evidence="2">tRNA (guanine-N(7)-)-methyltransferase</fullName>
        <ecNumber evidence="2">2.1.1.33</ecNumber>
    </recommendedName>
    <alternativeName>
        <fullName evidence="2">tRNA (guanine(46)-N(7))-methyltransferase</fullName>
    </alternativeName>
    <alternativeName>
        <fullName evidence="2">tRNA(m7G46)-methyltransferase</fullName>
    </alternativeName>
</protein>
<accession>B0UWE3</accession>
<comment type="function">
    <text evidence="2">Catalyzes the formation of N(7)-methylguanine at position 46 (m7G46) in tRNA.</text>
</comment>
<comment type="catalytic activity">
    <reaction evidence="2">
        <text>guanosine(46) in tRNA + S-adenosyl-L-methionine = N(7)-methylguanosine(46) in tRNA + S-adenosyl-L-homocysteine</text>
        <dbReference type="Rhea" id="RHEA:42708"/>
        <dbReference type="Rhea" id="RHEA-COMP:10188"/>
        <dbReference type="Rhea" id="RHEA-COMP:10189"/>
        <dbReference type="ChEBI" id="CHEBI:57856"/>
        <dbReference type="ChEBI" id="CHEBI:59789"/>
        <dbReference type="ChEBI" id="CHEBI:74269"/>
        <dbReference type="ChEBI" id="CHEBI:74480"/>
        <dbReference type="EC" id="2.1.1.33"/>
    </reaction>
</comment>
<comment type="pathway">
    <text evidence="2">tRNA modification; N(7)-methylguanine-tRNA biosynthesis.</text>
</comment>
<comment type="similarity">
    <text evidence="2">Belongs to the class I-like SAM-binding methyltransferase superfamily. TrmB family.</text>
</comment>
<gene>
    <name evidence="2" type="primary">trmB</name>
    <name type="ordered locus">HSM_1828</name>
</gene>
<sequence length="251" mass="28948">MTEQKITFADQKRKTVEIAEFTEDGRYKRKVRSFVLRTGRLSEFQRNMMNNNWATLGLEYQTTAFDFTQIYGNTNPVILEIGFGMGKSLVEMALQNPDKNYLGIEVHTPGVGACIAYAVEKQVKNLRVICHDATEILQDCIADNSLAGLQLFFPDPWHKTKHHKRRIVQPHFVEKIQQKLVPNGFVHMATDWENYAEYMLEVLTSAVGLHNTSATNDYIPRPDFRPLTKFEQRGHKLGHGVWDLFFIKNIT</sequence>
<dbReference type="EC" id="2.1.1.33" evidence="2"/>
<dbReference type="EMBL" id="CP000947">
    <property type="protein sequence ID" value="ACA31614.1"/>
    <property type="molecule type" value="Genomic_DNA"/>
</dbReference>
<dbReference type="RefSeq" id="WP_012340923.1">
    <property type="nucleotide sequence ID" value="NC_010519.1"/>
</dbReference>
<dbReference type="SMR" id="B0UWE3"/>
<dbReference type="STRING" id="228400.HSM_1828"/>
<dbReference type="GeneID" id="31488135"/>
<dbReference type="KEGG" id="hsm:HSM_1828"/>
<dbReference type="HOGENOM" id="CLU_050910_0_1_6"/>
<dbReference type="UniPathway" id="UPA00989"/>
<dbReference type="GO" id="GO:0043527">
    <property type="term" value="C:tRNA methyltransferase complex"/>
    <property type="evidence" value="ECO:0007669"/>
    <property type="project" value="TreeGrafter"/>
</dbReference>
<dbReference type="GO" id="GO:0008176">
    <property type="term" value="F:tRNA (guanine(46)-N7)-methyltransferase activity"/>
    <property type="evidence" value="ECO:0007669"/>
    <property type="project" value="UniProtKB-UniRule"/>
</dbReference>
<dbReference type="FunFam" id="3.40.50.150:FF:000035">
    <property type="entry name" value="tRNA (guanine-N(7)-)-methyltransferase"/>
    <property type="match status" value="1"/>
</dbReference>
<dbReference type="Gene3D" id="3.40.50.150">
    <property type="entry name" value="Vaccinia Virus protein VP39"/>
    <property type="match status" value="1"/>
</dbReference>
<dbReference type="HAMAP" id="MF_01057">
    <property type="entry name" value="tRNA_methyltr_TrmB"/>
    <property type="match status" value="1"/>
</dbReference>
<dbReference type="InterPro" id="IPR029063">
    <property type="entry name" value="SAM-dependent_MTases_sf"/>
</dbReference>
<dbReference type="InterPro" id="IPR003358">
    <property type="entry name" value="tRNA_(Gua-N-7)_MeTrfase_Trmb"/>
</dbReference>
<dbReference type="InterPro" id="IPR055361">
    <property type="entry name" value="tRNA_methyltr_TrmB_bact"/>
</dbReference>
<dbReference type="NCBIfam" id="TIGR00091">
    <property type="entry name" value="tRNA (guanosine(46)-N7)-methyltransferase TrmB"/>
    <property type="match status" value="1"/>
</dbReference>
<dbReference type="PANTHER" id="PTHR23417">
    <property type="entry name" value="3-DEOXY-D-MANNO-OCTULOSONIC-ACID TRANSFERASE/TRNA GUANINE-N 7 - -METHYLTRANSFERASE"/>
    <property type="match status" value="1"/>
</dbReference>
<dbReference type="PANTHER" id="PTHR23417:SF14">
    <property type="entry name" value="PENTACOTRIPEPTIDE-REPEAT REGION OF PRORP DOMAIN-CONTAINING PROTEIN"/>
    <property type="match status" value="1"/>
</dbReference>
<dbReference type="Pfam" id="PF02390">
    <property type="entry name" value="Methyltransf_4"/>
    <property type="match status" value="1"/>
</dbReference>
<dbReference type="SUPFAM" id="SSF53335">
    <property type="entry name" value="S-adenosyl-L-methionine-dependent methyltransferases"/>
    <property type="match status" value="1"/>
</dbReference>
<dbReference type="PROSITE" id="PS51625">
    <property type="entry name" value="SAM_MT_TRMB"/>
    <property type="match status" value="1"/>
</dbReference>
<evidence type="ECO:0000250" key="1"/>
<evidence type="ECO:0000255" key="2">
    <source>
        <dbReference type="HAMAP-Rule" id="MF_01057"/>
    </source>
</evidence>
<organism>
    <name type="scientific">Histophilus somni (strain 2336)</name>
    <name type="common">Haemophilus somnus</name>
    <dbReference type="NCBI Taxonomy" id="228400"/>
    <lineage>
        <taxon>Bacteria</taxon>
        <taxon>Pseudomonadati</taxon>
        <taxon>Pseudomonadota</taxon>
        <taxon>Gammaproteobacteria</taxon>
        <taxon>Pasteurellales</taxon>
        <taxon>Pasteurellaceae</taxon>
        <taxon>Histophilus</taxon>
    </lineage>
</organism>
<proteinExistence type="inferred from homology"/>
<keyword id="KW-0489">Methyltransferase</keyword>
<keyword id="KW-0949">S-adenosyl-L-methionine</keyword>
<keyword id="KW-0808">Transferase</keyword>
<keyword id="KW-0819">tRNA processing</keyword>